<name>INV4_ARATH</name>
<evidence type="ECO:0000250" key="1"/>
<evidence type="ECO:0000255" key="2"/>
<evidence type="ECO:0000255" key="3">
    <source>
        <dbReference type="PROSITE-ProRule" id="PRU10067"/>
    </source>
</evidence>
<evidence type="ECO:0000269" key="4">
    <source>
    </source>
</evidence>
<evidence type="ECO:0000305" key="5"/>
<reference key="1">
    <citation type="submission" date="2000-10" db="EMBL/GenBank/DDBJ databases">
        <title>acid invertase gene No. 6 from Arabidopsis.</title>
        <authorList>
            <person name="Toyomasu T."/>
            <person name="Sasaki S."/>
            <person name="Mitsuhasi W."/>
        </authorList>
    </citation>
    <scope>NUCLEOTIDE SEQUENCE [MRNA]</scope>
</reference>
<reference key="2">
    <citation type="journal article" date="1999" name="Nature">
        <title>Sequence and analysis of chromosome 2 of the plant Arabidopsis thaliana.</title>
        <authorList>
            <person name="Lin X."/>
            <person name="Kaul S."/>
            <person name="Rounsley S.D."/>
            <person name="Shea T.P."/>
            <person name="Benito M.-I."/>
            <person name="Town C.D."/>
            <person name="Fujii C.Y."/>
            <person name="Mason T.M."/>
            <person name="Bowman C.L."/>
            <person name="Barnstead M.E."/>
            <person name="Feldblyum T.V."/>
            <person name="Buell C.R."/>
            <person name="Ketchum K.A."/>
            <person name="Lee J.J."/>
            <person name="Ronning C.M."/>
            <person name="Koo H.L."/>
            <person name="Moffat K.S."/>
            <person name="Cronin L.A."/>
            <person name="Shen M."/>
            <person name="Pai G."/>
            <person name="Van Aken S."/>
            <person name="Umayam L."/>
            <person name="Tallon L.J."/>
            <person name="Gill J.E."/>
            <person name="Adams M.D."/>
            <person name="Carrera A.J."/>
            <person name="Creasy T.H."/>
            <person name="Goodman H.M."/>
            <person name="Somerville C.R."/>
            <person name="Copenhaver G.P."/>
            <person name="Preuss D."/>
            <person name="Nierman W.C."/>
            <person name="White O."/>
            <person name="Eisen J.A."/>
            <person name="Salzberg S.L."/>
            <person name="Fraser C.M."/>
            <person name="Venter J.C."/>
        </authorList>
    </citation>
    <scope>NUCLEOTIDE SEQUENCE [LARGE SCALE GENOMIC DNA]</scope>
    <source>
        <strain>cv. Columbia</strain>
    </source>
</reference>
<reference key="3">
    <citation type="journal article" date="2017" name="Plant J.">
        <title>Araport11: a complete reannotation of the Arabidopsis thaliana reference genome.</title>
        <authorList>
            <person name="Cheng C.Y."/>
            <person name="Krishnakumar V."/>
            <person name="Chan A.P."/>
            <person name="Thibaud-Nissen F."/>
            <person name="Schobel S."/>
            <person name="Town C.D."/>
        </authorList>
    </citation>
    <scope>GENOME REANNOTATION</scope>
    <source>
        <strain>cv. Columbia</strain>
    </source>
</reference>
<reference key="4">
    <citation type="submission" date="2002-03" db="EMBL/GenBank/DDBJ databases">
        <title>Full-length cDNA from Arabidopsis thaliana.</title>
        <authorList>
            <person name="Brover V.V."/>
            <person name="Troukhan M.E."/>
            <person name="Alexandrov N.A."/>
            <person name="Lu Y.-P."/>
            <person name="Flavell R.B."/>
            <person name="Feldmann K.A."/>
        </authorList>
    </citation>
    <scope>NUCLEOTIDE SEQUENCE [LARGE SCALE MRNA]</scope>
</reference>
<reference key="5">
    <citation type="journal article" date="2003" name="J. Exp. Bot.">
        <title>Roles of cell-wall invertases and monosaccharide transporters in the growth and development of Arabidopsis.</title>
        <authorList>
            <person name="Sherson S.M."/>
            <person name="Alford H.L."/>
            <person name="Forbes S.M."/>
            <person name="Wallace G."/>
            <person name="Smith S.M."/>
        </authorList>
    </citation>
    <scope>TISSUE SPECIFICITY</scope>
    <scope>GENE FAMILY</scope>
    <scope>NOMENCLATURE</scope>
</reference>
<accession>Q8W413</accession>
<accession>Q8L5V2</accession>
<accession>Q9SJN5</accession>
<keyword id="KW-0052">Apoplast</keyword>
<keyword id="KW-0134">Cell wall</keyword>
<keyword id="KW-1015">Disulfide bond</keyword>
<keyword id="KW-0325">Glycoprotein</keyword>
<keyword id="KW-0326">Glycosidase</keyword>
<keyword id="KW-0378">Hydrolase</keyword>
<keyword id="KW-1185">Reference proteome</keyword>
<keyword id="KW-0964">Secreted</keyword>
<keyword id="KW-0732">Signal</keyword>
<gene>
    <name type="primary">CWINV4</name>
    <name type="synonym">FRUCT6</name>
    <name type="ordered locus">At2g36190</name>
    <name type="ORF">F9C22.8</name>
</gene>
<sequence length="591" mass="67413">MAISNVISVLLLLLVLINLSNQNIKGIDAFHQIYEELQSESVESVNHLHRPSFHFQPPKHWINDPNGPVYYKGLYHLFYQYNTKGAVWGNIIWAHSVSKDLVNWEALEPALSPSKWFDIGGTWSGSITIVPGKGPIILYTGVNQNETQLQNYAIPEDPSDPYLRKWIKPDDNPIAIPDYTMNGSAFRDPTTAWFSKDGHWRTVVGSKRKRRGIAYIYRSRDFKHWVKAKHPVHSKQSTGMWECPDFFPVSLTDFRNGLDLDYVGPNTKHVLKVSLDITRYEYYTLGKYDLKKDRYIPDGNTPDGWEGLRFDYGNFYASKTFFDYKKNRRILWGWANESDTVEDDILKGWAGLQVIPRTVLLDSSKKQLVFWPVEEIESLRGNYVRMNNHDIKMGQRIEVKGITPAQADVEVTFYVGSLEKAEIFDPSFTWKPLELCNIKGSNVRGGVGPFGLITLATPDLEEYTPVFFRVFNDTKTHKPKVLMCSDARPSSLKQDTGLLAKDRMYKPSFAGFVDVDMADGRISLRSLIDHSVVESFGALGKTVITSRVYPVKAVKENAHLYVFNNGTQTVTIESLNAWNMDRPLQMNDGAL</sequence>
<protein>
    <recommendedName>
        <fullName>Beta-fructofuranosidase, insoluble isoenzyme CWINV4</fullName>
        <ecNumber>3.2.1.26</ecNumber>
    </recommendedName>
    <alternativeName>
        <fullName>Beta-fructofuranosidase 6</fullName>
        <shortName>AtFruct6</shortName>
    </alternativeName>
    <alternativeName>
        <fullName>Cell wall beta-fructosidase 4</fullName>
    </alternativeName>
    <alternativeName>
        <fullName>Cell wall invertase 4</fullName>
        <shortName>AtcwINV4</shortName>
    </alternativeName>
    <alternativeName>
        <fullName>Sucrose hydrolase 4</fullName>
    </alternativeName>
</protein>
<proteinExistence type="evidence at transcript level"/>
<organism>
    <name type="scientific">Arabidopsis thaliana</name>
    <name type="common">Mouse-ear cress</name>
    <dbReference type="NCBI Taxonomy" id="3702"/>
    <lineage>
        <taxon>Eukaryota</taxon>
        <taxon>Viridiplantae</taxon>
        <taxon>Streptophyta</taxon>
        <taxon>Embryophyta</taxon>
        <taxon>Tracheophyta</taxon>
        <taxon>Spermatophyta</taxon>
        <taxon>Magnoliopsida</taxon>
        <taxon>eudicotyledons</taxon>
        <taxon>Gunneridae</taxon>
        <taxon>Pentapetalae</taxon>
        <taxon>rosids</taxon>
        <taxon>malvids</taxon>
        <taxon>Brassicales</taxon>
        <taxon>Brassicaceae</taxon>
        <taxon>Camelineae</taxon>
        <taxon>Arabidopsis</taxon>
    </lineage>
</organism>
<dbReference type="EC" id="3.2.1.26"/>
<dbReference type="EMBL" id="AB049617">
    <property type="protein sequence ID" value="BAB83031.1"/>
    <property type="molecule type" value="mRNA"/>
</dbReference>
<dbReference type="EMBL" id="AC006921">
    <property type="protein sequence ID" value="AAD21446.2"/>
    <property type="molecule type" value="Genomic_DNA"/>
</dbReference>
<dbReference type="EMBL" id="AC007135">
    <property type="protein sequence ID" value="AAM15406.1"/>
    <property type="molecule type" value="Genomic_DNA"/>
</dbReference>
<dbReference type="EMBL" id="CP002685">
    <property type="protein sequence ID" value="AEC09214.1"/>
    <property type="molecule type" value="Genomic_DNA"/>
</dbReference>
<dbReference type="EMBL" id="AY084792">
    <property type="protein sequence ID" value="AAM61359.1"/>
    <property type="molecule type" value="mRNA"/>
</dbReference>
<dbReference type="PIR" id="G84777">
    <property type="entry name" value="G84777"/>
</dbReference>
<dbReference type="RefSeq" id="NP_565837.1">
    <property type="nucleotide sequence ID" value="NM_129177.3"/>
</dbReference>
<dbReference type="SMR" id="Q8W413"/>
<dbReference type="FunCoup" id="Q8W413">
    <property type="interactions" value="223"/>
</dbReference>
<dbReference type="STRING" id="3702.Q8W413"/>
<dbReference type="CAZy" id="GH32">
    <property type="family name" value="Glycoside Hydrolase Family 32"/>
</dbReference>
<dbReference type="GlyCosmos" id="Q8W413">
    <property type="glycosylation" value="5 sites, No reported glycans"/>
</dbReference>
<dbReference type="GlyGen" id="Q8W413">
    <property type="glycosylation" value="5 sites"/>
</dbReference>
<dbReference type="PaxDb" id="3702-AT2G36190.1"/>
<dbReference type="ProteomicsDB" id="248510"/>
<dbReference type="EnsemblPlants" id="AT2G36190.1">
    <property type="protein sequence ID" value="AT2G36190.1"/>
    <property type="gene ID" value="AT2G36190"/>
</dbReference>
<dbReference type="GeneID" id="818191"/>
<dbReference type="Gramene" id="AT2G36190.1">
    <property type="protein sequence ID" value="AT2G36190.1"/>
    <property type="gene ID" value="AT2G36190"/>
</dbReference>
<dbReference type="KEGG" id="ath:AT2G36190"/>
<dbReference type="Araport" id="AT2G36190"/>
<dbReference type="TAIR" id="AT2G36190">
    <property type="gene designation" value="CWINV4"/>
</dbReference>
<dbReference type="eggNOG" id="KOG0228">
    <property type="taxonomic scope" value="Eukaryota"/>
</dbReference>
<dbReference type="HOGENOM" id="CLU_001528_6_0_1"/>
<dbReference type="InParanoid" id="Q8W413"/>
<dbReference type="OMA" id="IPREMYV"/>
<dbReference type="PhylomeDB" id="Q8W413"/>
<dbReference type="BRENDA" id="3.2.1.26">
    <property type="organism ID" value="399"/>
</dbReference>
<dbReference type="PRO" id="PR:Q8W413"/>
<dbReference type="Proteomes" id="UP000006548">
    <property type="component" value="Chromosome 2"/>
</dbReference>
<dbReference type="ExpressionAtlas" id="Q8W413">
    <property type="expression patterns" value="baseline and differential"/>
</dbReference>
<dbReference type="GO" id="GO:0048046">
    <property type="term" value="C:apoplast"/>
    <property type="evidence" value="ECO:0007669"/>
    <property type="project" value="UniProtKB-SubCell"/>
</dbReference>
<dbReference type="GO" id="GO:0004575">
    <property type="term" value="F:sucrose alpha-glucosidase activity"/>
    <property type="evidence" value="ECO:0000315"/>
    <property type="project" value="TAIR"/>
</dbReference>
<dbReference type="GO" id="GO:0071836">
    <property type="term" value="P:nectar secretion"/>
    <property type="evidence" value="ECO:0000315"/>
    <property type="project" value="TAIR"/>
</dbReference>
<dbReference type="GO" id="GO:0048481">
    <property type="term" value="P:plant ovule development"/>
    <property type="evidence" value="ECO:0000315"/>
    <property type="project" value="TAIR"/>
</dbReference>
<dbReference type="GO" id="GO:0005982">
    <property type="term" value="P:starch metabolic process"/>
    <property type="evidence" value="ECO:0000315"/>
    <property type="project" value="TAIR"/>
</dbReference>
<dbReference type="GO" id="GO:0005987">
    <property type="term" value="P:sucrose catabolic process"/>
    <property type="evidence" value="ECO:0000315"/>
    <property type="project" value="TAIR"/>
</dbReference>
<dbReference type="CDD" id="cd18624">
    <property type="entry name" value="GH32_Fruct1-like"/>
    <property type="match status" value="1"/>
</dbReference>
<dbReference type="FunFam" id="2.115.10.20:FF:000001">
    <property type="entry name" value="Beta-fructofuranosidase, insoluble isoenzyme CWINV1"/>
    <property type="match status" value="1"/>
</dbReference>
<dbReference type="FunFam" id="2.60.120.560:FF:000002">
    <property type="entry name" value="Beta-fructofuranosidase, insoluble isoenzyme CWINV1"/>
    <property type="match status" value="1"/>
</dbReference>
<dbReference type="Gene3D" id="2.60.120.560">
    <property type="entry name" value="Exo-inulinase, domain 1"/>
    <property type="match status" value="1"/>
</dbReference>
<dbReference type="Gene3D" id="2.115.10.20">
    <property type="entry name" value="Glycosyl hydrolase domain, family 43"/>
    <property type="match status" value="1"/>
</dbReference>
<dbReference type="InterPro" id="IPR013320">
    <property type="entry name" value="ConA-like_dom_sf"/>
</dbReference>
<dbReference type="InterPro" id="IPR050551">
    <property type="entry name" value="Fructan_Metab_Enzymes"/>
</dbReference>
<dbReference type="InterPro" id="IPR001362">
    <property type="entry name" value="Glyco_hydro_32"/>
</dbReference>
<dbReference type="InterPro" id="IPR018053">
    <property type="entry name" value="Glyco_hydro_32_AS"/>
</dbReference>
<dbReference type="InterPro" id="IPR013189">
    <property type="entry name" value="Glyco_hydro_32_C"/>
</dbReference>
<dbReference type="InterPro" id="IPR013148">
    <property type="entry name" value="Glyco_hydro_32_N"/>
</dbReference>
<dbReference type="InterPro" id="IPR023296">
    <property type="entry name" value="Glyco_hydro_beta-prop_sf"/>
</dbReference>
<dbReference type="PANTHER" id="PTHR31953">
    <property type="entry name" value="BETA-FRUCTOFURANOSIDASE, INSOLUBLE ISOENZYME CWINV1-RELATED"/>
    <property type="match status" value="1"/>
</dbReference>
<dbReference type="Pfam" id="PF08244">
    <property type="entry name" value="Glyco_hydro_32C"/>
    <property type="match status" value="1"/>
</dbReference>
<dbReference type="Pfam" id="PF00251">
    <property type="entry name" value="Glyco_hydro_32N"/>
    <property type="match status" value="1"/>
</dbReference>
<dbReference type="SMART" id="SM00640">
    <property type="entry name" value="Glyco_32"/>
    <property type="match status" value="1"/>
</dbReference>
<dbReference type="SUPFAM" id="SSF75005">
    <property type="entry name" value="Arabinanase/levansucrase/invertase"/>
    <property type="match status" value="1"/>
</dbReference>
<dbReference type="SUPFAM" id="SSF49899">
    <property type="entry name" value="Concanavalin A-like lectins/glucanases"/>
    <property type="match status" value="1"/>
</dbReference>
<dbReference type="PROSITE" id="PS00609">
    <property type="entry name" value="GLYCOSYL_HYDROL_F32"/>
    <property type="match status" value="1"/>
</dbReference>
<feature type="signal peptide" evidence="2">
    <location>
        <begin position="1"/>
        <end position="22"/>
    </location>
</feature>
<feature type="chain" id="PRO_0000348350" description="Beta-fructofuranosidase, insoluble isoenzyme CWINV4">
    <location>
        <begin position="23"/>
        <end position="591"/>
    </location>
</feature>
<feature type="active site" evidence="3">
    <location>
        <position position="64"/>
    </location>
</feature>
<feature type="binding site" evidence="1">
    <location>
        <begin position="61"/>
        <end position="64"/>
    </location>
    <ligand>
        <name>substrate</name>
    </ligand>
</feature>
<feature type="binding site" evidence="1">
    <location>
        <position position="80"/>
    </location>
    <ligand>
        <name>substrate</name>
    </ligand>
</feature>
<feature type="binding site" evidence="1">
    <location>
        <position position="88"/>
    </location>
    <ligand>
        <name>substrate</name>
    </ligand>
</feature>
<feature type="binding site" evidence="1">
    <location>
        <begin position="123"/>
        <end position="124"/>
    </location>
    <ligand>
        <name>substrate</name>
    </ligand>
</feature>
<feature type="binding site" evidence="1">
    <location>
        <begin position="187"/>
        <end position="188"/>
    </location>
    <ligand>
        <name>substrate</name>
    </ligand>
</feature>
<feature type="binding site" evidence="1">
    <location>
        <position position="242"/>
    </location>
    <ligand>
        <name>substrate</name>
    </ligand>
</feature>
<feature type="binding site" evidence="1">
    <location>
        <position position="276"/>
    </location>
    <ligand>
        <name>substrate</name>
    </ligand>
</feature>
<feature type="glycosylation site" description="N-linked (GlcNAc...) asparagine" evidence="2">
    <location>
        <position position="145"/>
    </location>
</feature>
<feature type="glycosylation site" description="N-linked (GlcNAc...) asparagine" evidence="5">
    <location>
        <position position="182"/>
    </location>
</feature>
<feature type="glycosylation site" description="N-linked (GlcNAc...) asparagine" evidence="5">
    <location>
        <position position="336"/>
    </location>
</feature>
<feature type="glycosylation site" description="N-linked (GlcNAc...) asparagine" evidence="2">
    <location>
        <position position="472"/>
    </location>
</feature>
<feature type="glycosylation site" description="N-linked (GlcNAc...) asparagine" evidence="2">
    <location>
        <position position="565"/>
    </location>
</feature>
<feature type="disulfide bond" evidence="1">
    <location>
        <begin position="436"/>
        <end position="484"/>
    </location>
</feature>
<feature type="sequence conflict" description="In Ref. 4; AAM61359." evidence="5" ref="4">
    <original>G</original>
    <variation>V</variation>
    <location>
        <position position="134"/>
    </location>
</feature>
<feature type="sequence conflict" description="In Ref. 4; AAM61359." evidence="5" ref="4">
    <original>P</original>
    <variation>R</variation>
    <location>
        <position position="158"/>
    </location>
</feature>
<comment type="catalytic activity">
    <reaction evidence="3">
        <text>Hydrolysis of terminal non-reducing beta-D-fructofuranoside residues in beta-D-fructofuranosides.</text>
        <dbReference type="EC" id="3.2.1.26"/>
    </reaction>
</comment>
<comment type="subcellular location">
    <subcellularLocation>
        <location evidence="5">Secreted</location>
        <location evidence="5">Extracellular space</location>
        <location evidence="5">Apoplast</location>
    </subcellularLocation>
    <subcellularLocation>
        <location evidence="5">Secreted</location>
        <location evidence="5">Cell wall</location>
    </subcellularLocation>
    <text evidence="5">Associated to the cell wall.</text>
</comment>
<comment type="tissue specificity">
    <text evidence="4">Expressed in flowers, and seeds, and, to a lower extent, in seedlings.</text>
</comment>
<comment type="similarity">
    <text evidence="5">Belongs to the glycosyl hydrolase 32 family.</text>
</comment>